<protein>
    <recommendedName>
        <fullName evidence="1">Biosynthetic peptidoglycan transglycosylase</fullName>
        <ecNumber evidence="1">2.4.99.28</ecNumber>
    </recommendedName>
    <alternativeName>
        <fullName evidence="1">Glycan polymerase</fullName>
    </alternativeName>
    <alternativeName>
        <fullName evidence="1">Peptidoglycan glycosyltransferase MtgA</fullName>
        <shortName evidence="1">PGT</shortName>
    </alternativeName>
</protein>
<reference key="1">
    <citation type="submission" date="2008-02" db="EMBL/GenBank/DDBJ databases">
        <title>Complete sequence of Escherichia coli C str. ATCC 8739.</title>
        <authorList>
            <person name="Copeland A."/>
            <person name="Lucas S."/>
            <person name="Lapidus A."/>
            <person name="Glavina del Rio T."/>
            <person name="Dalin E."/>
            <person name="Tice H."/>
            <person name="Bruce D."/>
            <person name="Goodwin L."/>
            <person name="Pitluck S."/>
            <person name="Kiss H."/>
            <person name="Brettin T."/>
            <person name="Detter J.C."/>
            <person name="Han C."/>
            <person name="Kuske C.R."/>
            <person name="Schmutz J."/>
            <person name="Larimer F."/>
            <person name="Land M."/>
            <person name="Hauser L."/>
            <person name="Kyrpides N."/>
            <person name="Mikhailova N."/>
            <person name="Ingram L."/>
            <person name="Richardson P."/>
        </authorList>
    </citation>
    <scope>NUCLEOTIDE SEQUENCE [LARGE SCALE GENOMIC DNA]</scope>
    <source>
        <strain>ATCC 8739 / DSM 1576 / NBRC 3972 / NCIMB 8545 / WDCM 00012 / Crooks</strain>
    </source>
</reference>
<feature type="chain" id="PRO_1000083538" description="Biosynthetic peptidoglycan transglycosylase">
    <location>
        <begin position="1"/>
        <end position="242"/>
    </location>
</feature>
<feature type="transmembrane region" description="Helical" evidence="1">
    <location>
        <begin position="19"/>
        <end position="39"/>
    </location>
</feature>
<accession>B1IQR5</accession>
<dbReference type="EC" id="2.4.99.28" evidence="1"/>
<dbReference type="EMBL" id="CP000946">
    <property type="protein sequence ID" value="ACA76169.1"/>
    <property type="molecule type" value="Genomic_DNA"/>
</dbReference>
<dbReference type="RefSeq" id="WP_000047093.1">
    <property type="nucleotide sequence ID" value="NZ_MTFT01000027.1"/>
</dbReference>
<dbReference type="SMR" id="B1IQR5"/>
<dbReference type="CAZy" id="GT51">
    <property type="family name" value="Glycosyltransferase Family 51"/>
</dbReference>
<dbReference type="KEGG" id="ecl:EcolC_0492"/>
<dbReference type="HOGENOM" id="CLU_006354_1_1_6"/>
<dbReference type="UniPathway" id="UPA00219"/>
<dbReference type="GO" id="GO:0009274">
    <property type="term" value="C:peptidoglycan-based cell wall"/>
    <property type="evidence" value="ECO:0007669"/>
    <property type="project" value="InterPro"/>
</dbReference>
<dbReference type="GO" id="GO:0005886">
    <property type="term" value="C:plasma membrane"/>
    <property type="evidence" value="ECO:0007669"/>
    <property type="project" value="UniProtKB-SubCell"/>
</dbReference>
<dbReference type="GO" id="GO:0016763">
    <property type="term" value="F:pentosyltransferase activity"/>
    <property type="evidence" value="ECO:0007669"/>
    <property type="project" value="InterPro"/>
</dbReference>
<dbReference type="GO" id="GO:0008955">
    <property type="term" value="F:peptidoglycan glycosyltransferase activity"/>
    <property type="evidence" value="ECO:0007669"/>
    <property type="project" value="UniProtKB-UniRule"/>
</dbReference>
<dbReference type="GO" id="GO:0071555">
    <property type="term" value="P:cell wall organization"/>
    <property type="evidence" value="ECO:0007669"/>
    <property type="project" value="UniProtKB-KW"/>
</dbReference>
<dbReference type="GO" id="GO:0009252">
    <property type="term" value="P:peptidoglycan biosynthetic process"/>
    <property type="evidence" value="ECO:0007669"/>
    <property type="project" value="UniProtKB-UniRule"/>
</dbReference>
<dbReference type="GO" id="GO:0008360">
    <property type="term" value="P:regulation of cell shape"/>
    <property type="evidence" value="ECO:0007669"/>
    <property type="project" value="UniProtKB-KW"/>
</dbReference>
<dbReference type="FunFam" id="1.10.3810.10:FF:000004">
    <property type="entry name" value="Biosynthetic peptidoglycan transglycosylase"/>
    <property type="match status" value="1"/>
</dbReference>
<dbReference type="Gene3D" id="1.10.3810.10">
    <property type="entry name" value="Biosynthetic peptidoglycan transglycosylase-like"/>
    <property type="match status" value="1"/>
</dbReference>
<dbReference type="HAMAP" id="MF_00766">
    <property type="entry name" value="PGT_MtgA"/>
    <property type="match status" value="1"/>
</dbReference>
<dbReference type="InterPro" id="IPR001264">
    <property type="entry name" value="Glyco_trans_51"/>
</dbReference>
<dbReference type="InterPro" id="IPR023346">
    <property type="entry name" value="Lysozyme-like_dom_sf"/>
</dbReference>
<dbReference type="InterPro" id="IPR036950">
    <property type="entry name" value="PBP_transglycosylase"/>
</dbReference>
<dbReference type="InterPro" id="IPR011812">
    <property type="entry name" value="Pep_trsgly"/>
</dbReference>
<dbReference type="NCBIfam" id="TIGR02070">
    <property type="entry name" value="mono_pep_trsgly"/>
    <property type="match status" value="1"/>
</dbReference>
<dbReference type="PANTHER" id="PTHR30400:SF0">
    <property type="entry name" value="BIOSYNTHETIC PEPTIDOGLYCAN TRANSGLYCOSYLASE"/>
    <property type="match status" value="1"/>
</dbReference>
<dbReference type="PANTHER" id="PTHR30400">
    <property type="entry name" value="MONOFUNCTIONAL BIOSYNTHETIC PEPTIDOGLYCAN TRANSGLYCOSYLASE"/>
    <property type="match status" value="1"/>
</dbReference>
<dbReference type="Pfam" id="PF00912">
    <property type="entry name" value="Transgly"/>
    <property type="match status" value="1"/>
</dbReference>
<dbReference type="SUPFAM" id="SSF53955">
    <property type="entry name" value="Lysozyme-like"/>
    <property type="match status" value="1"/>
</dbReference>
<keyword id="KW-0997">Cell inner membrane</keyword>
<keyword id="KW-1003">Cell membrane</keyword>
<keyword id="KW-0133">Cell shape</keyword>
<keyword id="KW-0961">Cell wall biogenesis/degradation</keyword>
<keyword id="KW-0328">Glycosyltransferase</keyword>
<keyword id="KW-0472">Membrane</keyword>
<keyword id="KW-0573">Peptidoglycan synthesis</keyword>
<keyword id="KW-0808">Transferase</keyword>
<keyword id="KW-0812">Transmembrane</keyword>
<keyword id="KW-1133">Transmembrane helix</keyword>
<sequence length="242" mass="27350">MSKSRLTVFSFVRRFLLRLMVVLAVFWGGGIALFSVAPVPFSAVMVERQVSAWLHGNFRYVAHSDWVSMDQISPWMGLAVIAAEDQKFPEHWGFDVASIEKALAHNERNENRIRGASTISQQTAKNLFLWDGRSWVRKGLEAGLTLGIETVWSKKRILTVYLNIAEFGDGVFGVEAAAQRYFHKPASKLTRSEAALLAAVLPNPRRFKVSAPSGYVHSRQAWILRQMYQLGGEPFMQQHQLD</sequence>
<comment type="function">
    <text evidence="1">Peptidoglycan polymerase that catalyzes glycan chain elongation from lipid-linked precursors.</text>
</comment>
<comment type="catalytic activity">
    <reaction evidence="1">
        <text>[GlcNAc-(1-&gt;4)-Mur2Ac(oyl-L-Ala-gamma-D-Glu-L-Lys-D-Ala-D-Ala)](n)-di-trans,octa-cis-undecaprenyl diphosphate + beta-D-GlcNAc-(1-&gt;4)-Mur2Ac(oyl-L-Ala-gamma-D-Glu-L-Lys-D-Ala-D-Ala)-di-trans,octa-cis-undecaprenyl diphosphate = [GlcNAc-(1-&gt;4)-Mur2Ac(oyl-L-Ala-gamma-D-Glu-L-Lys-D-Ala-D-Ala)](n+1)-di-trans,octa-cis-undecaprenyl diphosphate + di-trans,octa-cis-undecaprenyl diphosphate + H(+)</text>
        <dbReference type="Rhea" id="RHEA:23708"/>
        <dbReference type="Rhea" id="RHEA-COMP:9602"/>
        <dbReference type="Rhea" id="RHEA-COMP:9603"/>
        <dbReference type="ChEBI" id="CHEBI:15378"/>
        <dbReference type="ChEBI" id="CHEBI:58405"/>
        <dbReference type="ChEBI" id="CHEBI:60033"/>
        <dbReference type="ChEBI" id="CHEBI:78435"/>
        <dbReference type="EC" id="2.4.99.28"/>
    </reaction>
</comment>
<comment type="pathway">
    <text evidence="1">Cell wall biogenesis; peptidoglycan biosynthesis.</text>
</comment>
<comment type="subcellular location">
    <subcellularLocation>
        <location evidence="1">Cell inner membrane</location>
        <topology evidence="1">Single-pass membrane protein</topology>
    </subcellularLocation>
</comment>
<comment type="similarity">
    <text evidence="1">Belongs to the glycosyltransferase 51 family.</text>
</comment>
<name>MTGA_ECOLC</name>
<proteinExistence type="inferred from homology"/>
<evidence type="ECO:0000255" key="1">
    <source>
        <dbReference type="HAMAP-Rule" id="MF_00766"/>
    </source>
</evidence>
<gene>
    <name evidence="1" type="primary">mtgA</name>
    <name type="ordered locus">EcolC_0492</name>
</gene>
<organism>
    <name type="scientific">Escherichia coli (strain ATCC 8739 / DSM 1576 / NBRC 3972 / NCIMB 8545 / WDCM 00012 / Crooks)</name>
    <dbReference type="NCBI Taxonomy" id="481805"/>
    <lineage>
        <taxon>Bacteria</taxon>
        <taxon>Pseudomonadati</taxon>
        <taxon>Pseudomonadota</taxon>
        <taxon>Gammaproteobacteria</taxon>
        <taxon>Enterobacterales</taxon>
        <taxon>Enterobacteriaceae</taxon>
        <taxon>Escherichia</taxon>
    </lineage>
</organism>